<gene>
    <name type="primary">ompH</name>
    <name type="ordered locus">PM0388</name>
</gene>
<feature type="signal peptide" evidence="1">
    <location>
        <begin position="1"/>
        <end position="20"/>
    </location>
</feature>
<feature type="chain" id="PRO_0000025269" description="Major outer membrane protein">
    <location>
        <begin position="21"/>
        <end position="348"/>
    </location>
</feature>
<feature type="sequence variant" description="In strain: Serotype 10.">
    <original>A</original>
    <variation>T</variation>
    <location>
        <position position="167"/>
    </location>
</feature>
<feature type="sequence variant" description="In strain: Serotype 10 and Serotype 12.">
    <original>PPP</original>
    <variation>APS</variation>
    <location>
        <begin position="221"/>
        <end position="223"/>
    </location>
</feature>
<name>OMPH_PASMU</name>
<evidence type="ECO:0000250" key="1"/>
<keyword id="KW-0998">Cell outer membrane</keyword>
<keyword id="KW-1015">Disulfide bond</keyword>
<keyword id="KW-0406">Ion transport</keyword>
<keyword id="KW-0472">Membrane</keyword>
<keyword id="KW-0626">Porin</keyword>
<keyword id="KW-1185">Reference proteome</keyword>
<keyword id="KW-0732">Signal</keyword>
<keyword id="KW-0812">Transmembrane</keyword>
<keyword id="KW-1134">Transmembrane beta strand</keyword>
<keyword id="KW-0813">Transport</keyword>
<organism>
    <name type="scientific">Pasteurella multocida (strain Pm70)</name>
    <dbReference type="NCBI Taxonomy" id="272843"/>
    <lineage>
        <taxon>Bacteria</taxon>
        <taxon>Pseudomonadati</taxon>
        <taxon>Pseudomonadota</taxon>
        <taxon>Gammaproteobacteria</taxon>
        <taxon>Pasteurellales</taxon>
        <taxon>Pasteurellaceae</taxon>
        <taxon>Pasteurella</taxon>
    </lineage>
</organism>
<reference key="1">
    <citation type="journal article" date="2001" name="Proc. Natl. Acad. Sci. U.S.A.">
        <title>Complete genomic sequence of Pasteurella multocida Pm70.</title>
        <authorList>
            <person name="May B.J."/>
            <person name="Zhang Q."/>
            <person name="Li L.L."/>
            <person name="Paustian M.L."/>
            <person name="Whittam T.S."/>
            <person name="Kapur V."/>
        </authorList>
    </citation>
    <scope>NUCLEOTIDE SEQUENCE [LARGE SCALE GENOMIC DNA]</scope>
    <source>
        <strain>Pm70</strain>
    </source>
</reference>
<reference key="2">
    <citation type="journal article" date="1999" name="Vaccine">
        <title>Sequence analysis of Pasteurella multocida major outer membrane protein (OmpH) and application of synthetic peptides in vaccination of chickens against homologous strain challenge.</title>
        <authorList>
            <person name="Luo Y."/>
            <person name="Zeng Q."/>
            <person name="Glisson J.R."/>
            <person name="Jackwood M.W."/>
            <person name="Cheng I.H."/>
            <person name="Wang C."/>
        </authorList>
    </citation>
    <scope>NUCLEOTIDE SEQUENCE [GENOMIC DNA] OF 21-348</scope>
    <source>
        <strain>Serotype 10</strain>
        <strain>Serotype 12</strain>
    </source>
</reference>
<dbReference type="EMBL" id="AE004439">
    <property type="protein sequence ID" value="AAK02472.1"/>
    <property type="molecule type" value="Genomic_DNA"/>
</dbReference>
<dbReference type="EMBL" id="U52207">
    <property type="protein sequence ID" value="AAC02251.1"/>
    <property type="molecule type" value="Genomic_DNA"/>
</dbReference>
<dbReference type="EMBL" id="U52209">
    <property type="protein sequence ID" value="AAC02253.1"/>
    <property type="molecule type" value="Genomic_DNA"/>
</dbReference>
<dbReference type="RefSeq" id="WP_010906619.1">
    <property type="nucleotide sequence ID" value="NC_002663.1"/>
</dbReference>
<dbReference type="SMR" id="Q9CNN9"/>
<dbReference type="STRING" id="272843.PM0388"/>
<dbReference type="TCDB" id="1.B.1.1.14">
    <property type="family name" value="the general bacterial porin (gbp) family"/>
</dbReference>
<dbReference type="EnsemblBacteria" id="AAK02472">
    <property type="protein sequence ID" value="AAK02472"/>
    <property type="gene ID" value="PM0388"/>
</dbReference>
<dbReference type="KEGG" id="pmu:PM0388"/>
<dbReference type="PATRIC" id="fig|272843.6.peg.401"/>
<dbReference type="HOGENOM" id="CLU_058202_1_1_6"/>
<dbReference type="OrthoDB" id="5689851at2"/>
<dbReference type="Proteomes" id="UP000000809">
    <property type="component" value="Chromosome"/>
</dbReference>
<dbReference type="GO" id="GO:0009279">
    <property type="term" value="C:cell outer membrane"/>
    <property type="evidence" value="ECO:0007669"/>
    <property type="project" value="UniProtKB-SubCell"/>
</dbReference>
<dbReference type="GO" id="GO:0046930">
    <property type="term" value="C:pore complex"/>
    <property type="evidence" value="ECO:0007669"/>
    <property type="project" value="UniProtKB-KW"/>
</dbReference>
<dbReference type="GO" id="GO:0015288">
    <property type="term" value="F:porin activity"/>
    <property type="evidence" value="ECO:0007669"/>
    <property type="project" value="UniProtKB-KW"/>
</dbReference>
<dbReference type="GO" id="GO:0006811">
    <property type="term" value="P:monoatomic ion transport"/>
    <property type="evidence" value="ECO:0007669"/>
    <property type="project" value="UniProtKB-KW"/>
</dbReference>
<dbReference type="CDD" id="cd00342">
    <property type="entry name" value="gram_neg_porins"/>
    <property type="match status" value="1"/>
</dbReference>
<dbReference type="Gene3D" id="2.40.160.10">
    <property type="entry name" value="Porin"/>
    <property type="match status" value="1"/>
</dbReference>
<dbReference type="InterPro" id="IPR050298">
    <property type="entry name" value="Gram-neg_bact_OMP"/>
</dbReference>
<dbReference type="InterPro" id="IPR033900">
    <property type="entry name" value="Gram_neg_porin_domain"/>
</dbReference>
<dbReference type="InterPro" id="IPR023614">
    <property type="entry name" value="Porin_dom_sf"/>
</dbReference>
<dbReference type="InterPro" id="IPR002299">
    <property type="entry name" value="Porin_Neis"/>
</dbReference>
<dbReference type="PANTHER" id="PTHR34501:SF2">
    <property type="entry name" value="OUTER MEMBRANE PORIN F-RELATED"/>
    <property type="match status" value="1"/>
</dbReference>
<dbReference type="PANTHER" id="PTHR34501">
    <property type="entry name" value="PROTEIN YDDL-RELATED"/>
    <property type="match status" value="1"/>
</dbReference>
<dbReference type="Pfam" id="PF13609">
    <property type="entry name" value="Porin_4"/>
    <property type="match status" value="1"/>
</dbReference>
<dbReference type="PRINTS" id="PR00184">
    <property type="entry name" value="NEISSPPORIN"/>
</dbReference>
<dbReference type="SUPFAM" id="SSF56935">
    <property type="entry name" value="Porins"/>
    <property type="match status" value="1"/>
</dbReference>
<proteinExistence type="inferred from homology"/>
<protein>
    <recommendedName>
        <fullName>Major outer membrane protein</fullName>
        <shortName>MOMP</shortName>
    </recommendedName>
    <alternativeName>
        <fullName>Outer membrane protein H</fullName>
    </alternativeName>
</protein>
<comment type="function">
    <text evidence="1">Structural rigidity of the outer membrane of elementary bodies and porin forming, permitting diffusion of solutes through the intracellular reticulate body membrane.</text>
</comment>
<comment type="subunit">
    <text evidence="1">Disulfide bond interactions within and between MOMP molecules and other components form high molecular-weight oligomers.</text>
</comment>
<comment type="subcellular location">
    <subcellularLocation>
        <location>Cell outer membrane</location>
        <topology>Multi-pass membrane protein</topology>
    </subcellularLocation>
</comment>
<sequence length="348" mass="37450">MKKTIVALAVAAVAATSANAATVYNQDGTKVDVNGSVRLLLKKEKDKRGDLMDNGSRVSFKASHDLGEGLSALAYAELRFSKDVKNKDGEVIKQPIGNNVHAKRLYAGFAYEGVGTLTFGNQLTIGDDVGVSDYTYFLGGINNLLSSGEKAINFKSAEFNGLTFGGAYVFSDDFDKNGLRDGRGFVVAGLYNRKIGDVGFAFEAGYSQKYVKQEVASVLPPPPGSVTVYKDEKEKAFMVGAELSYAGLALGVDYAQSKVTNVDGKKRALEVGLNYDINDKAKVYTDFIWAKEGPKGATTRDRSIILGAGYKLHKQVETFVEGGWGREKDANGVTTKDNVVGVGLRVHF</sequence>
<accession>Q9CNN9</accession>
<accession>O54347</accession>
<accession>O54349</accession>